<protein>
    <recommendedName>
        <fullName evidence="1">Carboxy-S-adenosyl-L-methionine synthase</fullName>
        <shortName evidence="1">Cx-SAM synthase</shortName>
        <ecNumber evidence="1">2.1.3.-</ecNumber>
    </recommendedName>
</protein>
<evidence type="ECO:0000255" key="1">
    <source>
        <dbReference type="HAMAP-Rule" id="MF_01589"/>
    </source>
</evidence>
<evidence type="ECO:0000305" key="2"/>
<name>CMOA_CELJU</name>
<gene>
    <name evidence="1" type="primary">cmoA</name>
    <name type="ordered locus">CJA_1807</name>
</gene>
<proteinExistence type="inferred from homology"/>
<organism>
    <name type="scientific">Cellvibrio japonicus (strain Ueda107)</name>
    <name type="common">Pseudomonas fluorescens subsp. cellulosa</name>
    <dbReference type="NCBI Taxonomy" id="498211"/>
    <lineage>
        <taxon>Bacteria</taxon>
        <taxon>Pseudomonadati</taxon>
        <taxon>Pseudomonadota</taxon>
        <taxon>Gammaproteobacteria</taxon>
        <taxon>Cellvibrionales</taxon>
        <taxon>Cellvibrionaceae</taxon>
        <taxon>Cellvibrio</taxon>
    </lineage>
</organism>
<accession>B3PFU2</accession>
<keyword id="KW-1185">Reference proteome</keyword>
<keyword id="KW-0949">S-adenosyl-L-methionine</keyword>
<keyword id="KW-0808">Transferase</keyword>
<reference key="1">
    <citation type="journal article" date="2008" name="J. Bacteriol.">
        <title>Insights into plant cell wall degradation from the genome sequence of the soil bacterium Cellvibrio japonicus.</title>
        <authorList>
            <person name="DeBoy R.T."/>
            <person name="Mongodin E.F."/>
            <person name="Fouts D.E."/>
            <person name="Tailford L.E."/>
            <person name="Khouri H."/>
            <person name="Emerson J.B."/>
            <person name="Mohamoud Y."/>
            <person name="Watkins K."/>
            <person name="Henrissat B."/>
            <person name="Gilbert H.J."/>
            <person name="Nelson K.E."/>
        </authorList>
    </citation>
    <scope>NUCLEOTIDE SEQUENCE [LARGE SCALE GENOMIC DNA]</scope>
    <source>
        <strain>Ueda107</strain>
    </source>
</reference>
<comment type="function">
    <text evidence="1">Catalyzes the conversion of S-adenosyl-L-methionine (SAM) to carboxy-S-adenosyl-L-methionine (Cx-SAM).</text>
</comment>
<comment type="catalytic activity">
    <reaction evidence="1">
        <text>prephenate + S-adenosyl-L-methionine = carboxy-S-adenosyl-L-methionine + 3-phenylpyruvate + H2O</text>
        <dbReference type="Rhea" id="RHEA:51692"/>
        <dbReference type="ChEBI" id="CHEBI:15377"/>
        <dbReference type="ChEBI" id="CHEBI:18005"/>
        <dbReference type="ChEBI" id="CHEBI:29934"/>
        <dbReference type="ChEBI" id="CHEBI:59789"/>
        <dbReference type="ChEBI" id="CHEBI:134278"/>
    </reaction>
</comment>
<comment type="subunit">
    <text evidence="1">Homodimer.</text>
</comment>
<comment type="similarity">
    <text evidence="1">Belongs to the class I-like SAM-binding methyltransferase superfamily. Cx-SAM synthase family.</text>
</comment>
<comment type="sequence caution" evidence="2">
    <conflict type="erroneous initiation">
        <sequence resource="EMBL-CDS" id="ACE84434"/>
    </conflict>
</comment>
<dbReference type="EC" id="2.1.3.-" evidence="1"/>
<dbReference type="EMBL" id="CP000934">
    <property type="protein sequence ID" value="ACE84434.1"/>
    <property type="status" value="ALT_INIT"/>
    <property type="molecule type" value="Genomic_DNA"/>
</dbReference>
<dbReference type="RefSeq" id="WP_041551365.1">
    <property type="nucleotide sequence ID" value="NC_010995.1"/>
</dbReference>
<dbReference type="SMR" id="B3PFU2"/>
<dbReference type="STRING" id="498211.CJA_1807"/>
<dbReference type="KEGG" id="cja:CJA_1807"/>
<dbReference type="eggNOG" id="COG2226">
    <property type="taxonomic scope" value="Bacteria"/>
</dbReference>
<dbReference type="HOGENOM" id="CLU_078475_0_0_6"/>
<dbReference type="OrthoDB" id="9779941at2"/>
<dbReference type="Proteomes" id="UP000001036">
    <property type="component" value="Chromosome"/>
</dbReference>
<dbReference type="GO" id="GO:0016743">
    <property type="term" value="F:carboxyl- or carbamoyltransferase activity"/>
    <property type="evidence" value="ECO:0007669"/>
    <property type="project" value="UniProtKB-UniRule"/>
</dbReference>
<dbReference type="GO" id="GO:1904047">
    <property type="term" value="F:S-adenosyl-L-methionine binding"/>
    <property type="evidence" value="ECO:0007669"/>
    <property type="project" value="UniProtKB-UniRule"/>
</dbReference>
<dbReference type="GO" id="GO:0002098">
    <property type="term" value="P:tRNA wobble uridine modification"/>
    <property type="evidence" value="ECO:0007669"/>
    <property type="project" value="InterPro"/>
</dbReference>
<dbReference type="CDD" id="cd02440">
    <property type="entry name" value="AdoMet_MTases"/>
    <property type="match status" value="1"/>
</dbReference>
<dbReference type="Gene3D" id="3.40.50.150">
    <property type="entry name" value="Vaccinia Virus protein VP39"/>
    <property type="match status" value="1"/>
</dbReference>
<dbReference type="HAMAP" id="MF_01589">
    <property type="entry name" value="Cx_SAM_synthase"/>
    <property type="match status" value="1"/>
</dbReference>
<dbReference type="InterPro" id="IPR005271">
    <property type="entry name" value="CmoA"/>
</dbReference>
<dbReference type="InterPro" id="IPR041698">
    <property type="entry name" value="Methyltransf_25"/>
</dbReference>
<dbReference type="InterPro" id="IPR029063">
    <property type="entry name" value="SAM-dependent_MTases_sf"/>
</dbReference>
<dbReference type="NCBIfam" id="TIGR00740">
    <property type="entry name" value="carboxy-S-adenosyl-L-methionine synthase CmoA"/>
    <property type="match status" value="1"/>
</dbReference>
<dbReference type="NCBIfam" id="NF011995">
    <property type="entry name" value="PRK15451.1"/>
    <property type="match status" value="1"/>
</dbReference>
<dbReference type="PANTHER" id="PTHR43861:SF2">
    <property type="entry name" value="CARBOXY-S-ADENOSYL-L-METHIONINE SYNTHASE"/>
    <property type="match status" value="1"/>
</dbReference>
<dbReference type="PANTHER" id="PTHR43861">
    <property type="entry name" value="TRANS-ACONITATE 2-METHYLTRANSFERASE-RELATED"/>
    <property type="match status" value="1"/>
</dbReference>
<dbReference type="Pfam" id="PF13649">
    <property type="entry name" value="Methyltransf_25"/>
    <property type="match status" value="1"/>
</dbReference>
<dbReference type="PIRSF" id="PIRSF006325">
    <property type="entry name" value="MeTrfase_bac"/>
    <property type="match status" value="1"/>
</dbReference>
<dbReference type="SUPFAM" id="SSF53335">
    <property type="entry name" value="S-adenosyl-L-methionine-dependent methyltransferases"/>
    <property type="match status" value="1"/>
</dbReference>
<sequence>MTHSKTDRLYANPLAQVSQFVFDENVVDVFPDMIKRSVPGYATIINMIGNLAERYTQSGSQCYDLGCSLGAATLAMRHRIQAADCKIIGVDSSAAMLQRCAQIMAADTSDIPVDLVEARIQDVPITNASVAVLNFTLQFIPLDERQSVLNNICAGLRPNGVLILSEKLAFEDETHQQLMIDLHHNFKRANGYSDLEIAQKRTSIENYLIPETLAAHRHRLRTAGFHSVDVWFQCFNFASLIAIK</sequence>
<feature type="chain" id="PRO_0000381956" description="Carboxy-S-adenosyl-L-methionine synthase">
    <location>
        <begin position="1"/>
        <end position="244"/>
    </location>
</feature>
<feature type="binding site" evidence="1">
    <location>
        <position position="41"/>
    </location>
    <ligand>
        <name>S-adenosyl-L-methionine</name>
        <dbReference type="ChEBI" id="CHEBI:59789"/>
    </ligand>
</feature>
<feature type="binding site" evidence="1">
    <location>
        <begin position="66"/>
        <end position="68"/>
    </location>
    <ligand>
        <name>S-adenosyl-L-methionine</name>
        <dbReference type="ChEBI" id="CHEBI:59789"/>
    </ligand>
</feature>
<feature type="binding site" evidence="1">
    <location>
        <position position="134"/>
    </location>
    <ligand>
        <name>S-adenosyl-L-methionine</name>
        <dbReference type="ChEBI" id="CHEBI:59789"/>
    </ligand>
</feature>
<feature type="binding site" evidence="1">
    <location>
        <position position="201"/>
    </location>
    <ligand>
        <name>S-adenosyl-L-methionine</name>
        <dbReference type="ChEBI" id="CHEBI:59789"/>
    </ligand>
</feature>